<sequence length="61" mass="6776">MAIAPITGTLKRKIITDISIGFACGFALATGYWYIEHKPLIVKREAYYAKLKAQQEAEDSA</sequence>
<evidence type="ECO:0000250" key="1">
    <source>
        <dbReference type="UniProtKB" id="P07255"/>
    </source>
</evidence>
<evidence type="ECO:0000255" key="2"/>
<evidence type="ECO:0000305" key="3"/>
<dbReference type="EMBL" id="CR382137">
    <property type="protein sequence ID" value="CAG88008.1"/>
    <property type="molecule type" value="Genomic_DNA"/>
</dbReference>
<dbReference type="RefSeq" id="XP_459769.1">
    <property type="nucleotide sequence ID" value="XM_459769.1"/>
</dbReference>
<dbReference type="SMR" id="Q6BPV1"/>
<dbReference type="FunCoup" id="Q6BPV1">
    <property type="interactions" value="105"/>
</dbReference>
<dbReference type="STRING" id="284592.Q6BPV1"/>
<dbReference type="GeneID" id="2902769"/>
<dbReference type="KEGG" id="dha:DEHA2E10626g"/>
<dbReference type="VEuPathDB" id="FungiDB:DEHA2E10626g"/>
<dbReference type="eggNOG" id="ENOG502SBM8">
    <property type="taxonomic scope" value="Eukaryota"/>
</dbReference>
<dbReference type="HOGENOM" id="CLU_196969_0_0_1"/>
<dbReference type="InParanoid" id="Q6BPV1"/>
<dbReference type="OMA" id="ASYWWWG"/>
<dbReference type="OrthoDB" id="2317211at2759"/>
<dbReference type="UniPathway" id="UPA00705"/>
<dbReference type="Proteomes" id="UP000000599">
    <property type="component" value="Chromosome E"/>
</dbReference>
<dbReference type="GO" id="GO:0005743">
    <property type="term" value="C:mitochondrial inner membrane"/>
    <property type="evidence" value="ECO:0007669"/>
    <property type="project" value="UniProtKB-SubCell"/>
</dbReference>
<dbReference type="GO" id="GO:0045277">
    <property type="term" value="C:respiratory chain complex IV"/>
    <property type="evidence" value="ECO:0007669"/>
    <property type="project" value="EnsemblFungi"/>
</dbReference>
<dbReference type="GO" id="GO:0004129">
    <property type="term" value="F:cytochrome-c oxidase activity"/>
    <property type="evidence" value="ECO:0007669"/>
    <property type="project" value="EnsemblFungi"/>
</dbReference>
<dbReference type="GO" id="GO:0006123">
    <property type="term" value="P:mitochondrial electron transport, cytochrome c to oxygen"/>
    <property type="evidence" value="ECO:0007669"/>
    <property type="project" value="EnsemblFungi"/>
</dbReference>
<dbReference type="CDD" id="cd22888">
    <property type="entry name" value="CcO_VIIa_fungal"/>
    <property type="match status" value="1"/>
</dbReference>
<dbReference type="InterPro" id="IPR014368">
    <property type="entry name" value="Cyt_c_oxidase_su7a_fun"/>
</dbReference>
<dbReference type="PANTHER" id="PTHR28264:SF1">
    <property type="entry name" value="CYTOCHROME C OXIDASE SUBUNIT 6C"/>
    <property type="match status" value="1"/>
</dbReference>
<dbReference type="PANTHER" id="PTHR28264">
    <property type="entry name" value="CYTOCHROME C OXIDASE SUBUNIT 7A"/>
    <property type="match status" value="1"/>
</dbReference>
<dbReference type="PIRSF" id="PIRSF000283">
    <property type="entry name" value="COX9"/>
    <property type="match status" value="1"/>
</dbReference>
<organism>
    <name type="scientific">Debaryomyces hansenii (strain ATCC 36239 / CBS 767 / BCRC 21394 / JCM 1990 / NBRC 0083 / IGC 2968)</name>
    <name type="common">Yeast</name>
    <name type="synonym">Torulaspora hansenii</name>
    <dbReference type="NCBI Taxonomy" id="284592"/>
    <lineage>
        <taxon>Eukaryota</taxon>
        <taxon>Fungi</taxon>
        <taxon>Dikarya</taxon>
        <taxon>Ascomycota</taxon>
        <taxon>Saccharomycotina</taxon>
        <taxon>Pichiomycetes</taxon>
        <taxon>Debaryomycetaceae</taxon>
        <taxon>Debaryomyces</taxon>
    </lineage>
</organism>
<feature type="chain" id="PRO_0000041767" description="Cytochrome c oxidase subunit 9, mitochondrial">
    <location>
        <begin position="1"/>
        <end position="56"/>
    </location>
</feature>
<feature type="propeptide" id="PRO_0000041768" description="Removed in mature form" evidence="1">
    <location>
        <begin position="57"/>
        <end position="61"/>
    </location>
</feature>
<feature type="topological domain" description="Mitochondrial matrix" evidence="1">
    <location>
        <begin position="1"/>
        <end position="13"/>
    </location>
</feature>
<feature type="transmembrane region" description="Helical" evidence="2">
    <location>
        <begin position="14"/>
        <end position="36"/>
    </location>
</feature>
<feature type="topological domain" description="Mitochondrial intermembrane" evidence="1">
    <location>
        <begin position="37"/>
        <end position="56"/>
    </location>
</feature>
<keyword id="KW-0472">Membrane</keyword>
<keyword id="KW-0496">Mitochondrion</keyword>
<keyword id="KW-0999">Mitochondrion inner membrane</keyword>
<keyword id="KW-0560">Oxidoreductase</keyword>
<keyword id="KW-1185">Reference proteome</keyword>
<keyword id="KW-0812">Transmembrane</keyword>
<keyword id="KW-1133">Transmembrane helix</keyword>
<protein>
    <recommendedName>
        <fullName>Cytochrome c oxidase subunit 9, mitochondrial</fullName>
    </recommendedName>
    <alternativeName>
        <fullName>Cytochrome c oxidase polypeptide VIIA</fullName>
    </alternativeName>
</protein>
<gene>
    <name type="primary">COX9</name>
    <name type="ordered locus">DEHA2E10626g</name>
</gene>
<proteinExistence type="inferred from homology"/>
<accession>Q6BPV1</accession>
<reference key="1">
    <citation type="journal article" date="2004" name="Nature">
        <title>Genome evolution in yeasts.</title>
        <authorList>
            <person name="Dujon B."/>
            <person name="Sherman D."/>
            <person name="Fischer G."/>
            <person name="Durrens P."/>
            <person name="Casaregola S."/>
            <person name="Lafontaine I."/>
            <person name="de Montigny J."/>
            <person name="Marck C."/>
            <person name="Neuveglise C."/>
            <person name="Talla E."/>
            <person name="Goffard N."/>
            <person name="Frangeul L."/>
            <person name="Aigle M."/>
            <person name="Anthouard V."/>
            <person name="Babour A."/>
            <person name="Barbe V."/>
            <person name="Barnay S."/>
            <person name="Blanchin S."/>
            <person name="Beckerich J.-M."/>
            <person name="Beyne E."/>
            <person name="Bleykasten C."/>
            <person name="Boisrame A."/>
            <person name="Boyer J."/>
            <person name="Cattolico L."/>
            <person name="Confanioleri F."/>
            <person name="de Daruvar A."/>
            <person name="Despons L."/>
            <person name="Fabre E."/>
            <person name="Fairhead C."/>
            <person name="Ferry-Dumazet H."/>
            <person name="Groppi A."/>
            <person name="Hantraye F."/>
            <person name="Hennequin C."/>
            <person name="Jauniaux N."/>
            <person name="Joyet P."/>
            <person name="Kachouri R."/>
            <person name="Kerrest A."/>
            <person name="Koszul R."/>
            <person name="Lemaire M."/>
            <person name="Lesur I."/>
            <person name="Ma L."/>
            <person name="Muller H."/>
            <person name="Nicaud J.-M."/>
            <person name="Nikolski M."/>
            <person name="Oztas S."/>
            <person name="Ozier-Kalogeropoulos O."/>
            <person name="Pellenz S."/>
            <person name="Potier S."/>
            <person name="Richard G.-F."/>
            <person name="Straub M.-L."/>
            <person name="Suleau A."/>
            <person name="Swennen D."/>
            <person name="Tekaia F."/>
            <person name="Wesolowski-Louvel M."/>
            <person name="Westhof E."/>
            <person name="Wirth B."/>
            <person name="Zeniou-Meyer M."/>
            <person name="Zivanovic Y."/>
            <person name="Bolotin-Fukuhara M."/>
            <person name="Thierry A."/>
            <person name="Bouchier C."/>
            <person name="Caudron B."/>
            <person name="Scarpelli C."/>
            <person name="Gaillardin C."/>
            <person name="Weissenbach J."/>
            <person name="Wincker P."/>
            <person name="Souciet J.-L."/>
        </authorList>
    </citation>
    <scope>NUCLEOTIDE SEQUENCE [LARGE SCALE GENOMIC DNA]</scope>
    <source>
        <strain>ATCC 36239 / CBS 767 / BCRC 21394 / JCM 1990 / NBRC 0083 / IGC 2968</strain>
    </source>
</reference>
<comment type="function">
    <text evidence="1">Component of the cytochrome c oxidase, the last enzyme in the mitochondrial electron transport chain which drives oxidative phosphorylation. The respiratory chain contains 3 multisubunit complexes succinate dehydrogenase (complex II, CII), ubiquinol-cytochrome c oxidoreductase (cytochrome b-c1 complex, complex III, CIII) and cytochrome c oxidase (complex IV, CIV), that cooperate to transfer electrons derived from NADH and succinate to molecular oxygen, creating an electrochemical gradient over the inner membrane that drives transmembrane transport and the ATP synthase. Cytochrome c oxidase is the component of the respiratory chain that catalyzes the reduction of oxygen to water. Electrons originating from reduced cytochrome c in the intermembrane space (IMS) are transferred via the dinuclear copper A center (CU(A)) of subunit 2 and heme A of subunit 1 to the active site in subunit 1, a binuclear center (BNC) formed by heme A3 and copper B (CU(B)). The BNC reduces molecular oxygen to 2 water molecules using 4 electrons from cytochrome c in the IMS and 4 protons from the mitochondrial matrix.</text>
</comment>
<comment type="pathway">
    <text evidence="1">Energy metabolism; oxidative phosphorylation.</text>
</comment>
<comment type="subunit">
    <text evidence="1">Component of the cytochrome c oxidase (complex IV, CIV), a multisubunit enzyme composed of a catalytic core of 3 subunits and several supernumerary subunits. The complex exists as a monomer or a dimer and forms supercomplexes (SCs) in the inner mitochondrial membrane with ubiquinol-cytochrome c oxidoreductase (cytochrome b-c1 complex, complex III, CIII).</text>
</comment>
<comment type="subcellular location">
    <subcellularLocation>
        <location evidence="1">Mitochondrion inner membrane</location>
        <topology evidence="1">Single-pass membrane protein</topology>
    </subcellularLocation>
</comment>
<comment type="similarity">
    <text evidence="3">Belongs to the fungal cytochrome c oxidase subunit 7a family.</text>
</comment>
<name>COX9_DEBHA</name>